<organism>
    <name type="scientific">Saccharomyces cerevisiae (strain ATCC 204508 / S288c)</name>
    <name type="common">Baker's yeast</name>
    <dbReference type="NCBI Taxonomy" id="559292"/>
    <lineage>
        <taxon>Eukaryota</taxon>
        <taxon>Fungi</taxon>
        <taxon>Dikarya</taxon>
        <taxon>Ascomycota</taxon>
        <taxon>Saccharomycotina</taxon>
        <taxon>Saccharomycetes</taxon>
        <taxon>Saccharomycetales</taxon>
        <taxon>Saccharomycetaceae</taxon>
        <taxon>Saccharomyces</taxon>
    </lineage>
</organism>
<evidence type="ECO:0000255" key="1">
    <source>
        <dbReference type="PROSITE-ProRule" id="PRU00080"/>
    </source>
</evidence>
<evidence type="ECO:0000256" key="2">
    <source>
        <dbReference type="SAM" id="MobiDB-lite"/>
    </source>
</evidence>
<evidence type="ECO:0000269" key="3">
    <source>
    </source>
</evidence>
<evidence type="ECO:0000269" key="4">
    <source>
    </source>
</evidence>
<evidence type="ECO:0000269" key="5">
    <source>
    </source>
</evidence>
<evidence type="ECO:0000269" key="6">
    <source>
    </source>
</evidence>
<evidence type="ECO:0000269" key="7">
    <source>
    </source>
</evidence>
<evidence type="ECO:0000269" key="8">
    <source>
    </source>
</evidence>
<evidence type="ECO:0000269" key="9">
    <source>
    </source>
</evidence>
<evidence type="ECO:0000269" key="10">
    <source>
    </source>
</evidence>
<evidence type="ECO:0000269" key="11">
    <source>
    </source>
</evidence>
<evidence type="ECO:0000269" key="12">
    <source>
    </source>
</evidence>
<evidence type="ECO:0000269" key="13">
    <source>
    </source>
</evidence>
<evidence type="ECO:0000303" key="14">
    <source>
    </source>
</evidence>
<evidence type="ECO:0000305" key="15"/>
<evidence type="ECO:0000312" key="16">
    <source>
        <dbReference type="SGD" id="S000001308"/>
    </source>
</evidence>
<evidence type="ECO:0007744" key="17">
    <source>
    </source>
</evidence>
<reference key="1">
    <citation type="journal article" date="1995" name="Mol. Cell. Biol.">
        <title>Met30p, a yeast transcriptional inhibitor that responds to S-adenosylmethionine, is an essential protein with WD40 repeats.</title>
        <authorList>
            <person name="Thomas D."/>
            <person name="Kuras L."/>
            <person name="Barbey R."/>
            <person name="Cherest H."/>
            <person name="Blaiseau P.L."/>
            <person name="Surdin-Kerjan Y."/>
        </authorList>
    </citation>
    <scope>NUCLEOTIDE SEQUENCE [GENOMIC DNA]</scope>
    <scope>FUNCTION</scope>
    <scope>INTERACTION WITH MET4</scope>
    <source>
        <strain>ATCC 26786 / X2180-1A</strain>
    </source>
</reference>
<reference key="2">
    <citation type="journal article" date="1997" name="Nature">
        <title>The nucleotide sequence of Saccharomyces cerevisiae chromosome IX.</title>
        <authorList>
            <person name="Churcher C.M."/>
            <person name="Bowman S."/>
            <person name="Badcock K."/>
            <person name="Bankier A.T."/>
            <person name="Brown D."/>
            <person name="Chillingworth T."/>
            <person name="Connor R."/>
            <person name="Devlin K."/>
            <person name="Gentles S."/>
            <person name="Hamlin N."/>
            <person name="Harris D.E."/>
            <person name="Horsnell T."/>
            <person name="Hunt S."/>
            <person name="Jagels K."/>
            <person name="Jones M."/>
            <person name="Lye G."/>
            <person name="Moule S."/>
            <person name="Odell C."/>
            <person name="Pearson D."/>
            <person name="Rajandream M.A."/>
            <person name="Rice P."/>
            <person name="Rowley N."/>
            <person name="Skelton J."/>
            <person name="Smith V."/>
            <person name="Walsh S.V."/>
            <person name="Whitehead S."/>
            <person name="Barrell B.G."/>
        </authorList>
    </citation>
    <scope>NUCLEOTIDE SEQUENCE [LARGE SCALE GENOMIC DNA]</scope>
    <source>
        <strain>ATCC 204508 / S288c</strain>
    </source>
</reference>
<reference key="3">
    <citation type="journal article" date="2014" name="G3 (Bethesda)">
        <title>The reference genome sequence of Saccharomyces cerevisiae: Then and now.</title>
        <authorList>
            <person name="Engel S.R."/>
            <person name="Dietrich F.S."/>
            <person name="Fisk D.G."/>
            <person name="Binkley G."/>
            <person name="Balakrishnan R."/>
            <person name="Costanzo M.C."/>
            <person name="Dwight S.S."/>
            <person name="Hitz B.C."/>
            <person name="Karra K."/>
            <person name="Nash R.S."/>
            <person name="Weng S."/>
            <person name="Wong E.D."/>
            <person name="Lloyd P."/>
            <person name="Skrzypek M.S."/>
            <person name="Miyasato S.R."/>
            <person name="Simison M."/>
            <person name="Cherry J.M."/>
        </authorList>
    </citation>
    <scope>GENOME REANNOTATION</scope>
    <source>
        <strain>ATCC 204508 / S288c</strain>
    </source>
</reference>
<reference key="4">
    <citation type="journal article" date="1998" name="Genes Dev.">
        <title>Cdc53 is a scaffold protein for multiple Cdc34/Skp1/F-box protein complexes that regulate cell division and methionine biosynthesis in yeast.</title>
        <authorList>
            <person name="Patton E.E."/>
            <person name="Willems A.R."/>
            <person name="Sa D."/>
            <person name="Kuras L."/>
            <person name="Thomas D."/>
            <person name="Craig K.L."/>
            <person name="Tyers M."/>
        </authorList>
    </citation>
    <scope>INTERACTION WITH SKP1/CBF3D AND CDC53</scope>
</reference>
<reference key="5">
    <citation type="journal article" date="1998" name="Genes Dev.">
        <title>Cdc34 and the F-box protein Met30 are required for degradation of the Cdk-inhibitory kinase Swe1.</title>
        <authorList>
            <person name="Kaiser P."/>
            <person name="Sia R.A.L."/>
            <person name="Bardes E.S.G."/>
            <person name="Lew D.J."/>
            <person name="Reed S.I."/>
        </authorList>
    </citation>
    <scope>FUNCTION</scope>
    <scope>SUBUNIT</scope>
    <scope>PATHWAY</scope>
</reference>
<reference key="6">
    <citation type="journal article" date="2000" name="EMBO J.">
        <title>Feedback-regulated degradation of the transcriptional activator Met4 is triggered by the SCF(Met30) complex.</title>
        <authorList>
            <person name="Rouillon A."/>
            <person name="Barbey R."/>
            <person name="Patton E.E."/>
            <person name="Tyers M."/>
            <person name="Thomas D."/>
        </authorList>
    </citation>
    <scope>FUNCTION</scope>
    <scope>SUBCELLULAR LOCATION</scope>
    <scope>INDUCTION</scope>
    <scope>INTERACTION WITH MET4 AND SKP1/CBF3D</scope>
</reference>
<reference key="7">
    <citation type="journal article" date="2000" name="Mol. Cell. Biol.">
        <title>The abundance of Met30p limits SCF(Met30p) complex activity and is regulated by methionine availability.</title>
        <authorList>
            <person name="Smothers D.B."/>
            <person name="Kozubowski L."/>
            <person name="Dixon C."/>
            <person name="Goebl M.G."/>
            <person name="Mathias N."/>
        </authorList>
    </citation>
    <scope>INDUCTION</scope>
</reference>
<reference key="8">
    <citation type="journal article" date="2003" name="Nature">
        <title>Global analysis of protein localization in budding yeast.</title>
        <authorList>
            <person name="Huh W.-K."/>
            <person name="Falvo J.V."/>
            <person name="Gerke L.C."/>
            <person name="Carroll A.S."/>
            <person name="Howson R.W."/>
            <person name="Weissman J.S."/>
            <person name="O'Shea E.K."/>
        </authorList>
    </citation>
    <scope>SUBCELLULAR LOCATION [LARGE SCALE ANALYSIS]</scope>
</reference>
<reference key="9">
    <citation type="journal article" date="2003" name="Nature">
        <title>Global analysis of protein expression in yeast.</title>
        <authorList>
            <person name="Ghaemmaghami S."/>
            <person name="Huh W.-K."/>
            <person name="Bower K."/>
            <person name="Howson R.W."/>
            <person name="Belle A."/>
            <person name="Dephoure N."/>
            <person name="O'Shea E.K."/>
            <person name="Weissman J.S."/>
        </authorList>
    </citation>
    <scope>LEVEL OF PROTEIN EXPRESSION [LARGE SCALE ANALYSIS]</scope>
</reference>
<reference key="10">
    <citation type="journal article" date="2004" name="J. Biol. Chem.">
        <title>The amino-terminal portion of the F-box protein Met30p mediates its nuclear import and assimilation into an SCF complex.</title>
        <authorList>
            <person name="Brunson L.E."/>
            <person name="Dixon C."/>
            <person name="Kozubowski L."/>
            <person name="Mathias N."/>
        </authorList>
    </citation>
    <scope>FUNCTION</scope>
    <scope>SUBCELLULAR LOCATION</scope>
    <scope>INTERACTION WITH SKP1/CBF3D</scope>
    <scope>HOMOMULTIMERIZATION</scope>
    <scope>MUTAGENESIS OF LEU-187 AND GLU-190</scope>
</reference>
<reference key="11">
    <citation type="journal article" date="2005" name="Mol. Biol. Cell">
        <title>The yeast ubiquitin ligase SCFMet30 regulates heavy metal response.</title>
        <authorList>
            <person name="Yen J.L."/>
            <person name="Su N.Y."/>
            <person name="Kaiser P."/>
        </authorList>
    </citation>
    <scope>FUNCTION</scope>
</reference>
<reference key="12">
    <citation type="journal article" date="2005" name="Mol. Cell. Biol.">
        <title>The F-box protein Met30 is required for multiple steps in the budding yeast cell cycle.</title>
        <authorList>
            <person name="Su N.Y."/>
            <person name="Flick K."/>
            <person name="Kaiser P."/>
        </authorList>
    </citation>
    <scope>FUNCTION</scope>
</reference>
<reference key="13">
    <citation type="journal article" date="2005" name="Mol. Genet. Genomics">
        <title>Identification of residues in the WD-40 repeat motif of the F-box protein Met30p required for interaction with its substrate Met4p.</title>
        <authorList>
            <person name="Brunson L.E."/>
            <person name="Dixon C."/>
            <person name="LeFebvre A."/>
            <person name="Sun L."/>
            <person name="Mathias N."/>
        </authorList>
    </citation>
    <scope>INTERACTION WITH MET4</scope>
    <scope>MUTAGENESIS OF LEU-386; ASN-425; GLN-467 AND LEU-530</scope>
</reference>
<reference key="14">
    <citation type="journal article" date="2007" name="J. Proteome Res.">
        <title>Large-scale phosphorylation analysis of alpha-factor-arrested Saccharomyces cerevisiae.</title>
        <authorList>
            <person name="Li X."/>
            <person name="Gerber S.A."/>
            <person name="Rudner A.D."/>
            <person name="Beausoleil S.A."/>
            <person name="Haas W."/>
            <person name="Villen J."/>
            <person name="Elias J.E."/>
            <person name="Gygi S.P."/>
        </authorList>
    </citation>
    <scope>IDENTIFICATION BY MASS SPECTROMETRY [LARGE SCALE ANALYSIS]</scope>
    <source>
        <strain>ADR376</strain>
    </source>
</reference>
<reference key="15">
    <citation type="journal article" date="2008" name="Mol. Cell. Proteomics">
        <title>A multidimensional chromatography technology for in-depth phosphoproteome analysis.</title>
        <authorList>
            <person name="Albuquerque C.P."/>
            <person name="Smolka M.B."/>
            <person name="Payne S.H."/>
            <person name="Bafna V."/>
            <person name="Eng J."/>
            <person name="Zhou H."/>
        </authorList>
    </citation>
    <scope>IDENTIFICATION BY MASS SPECTROMETRY [LARGE SCALE ANALYSIS]</scope>
</reference>
<reference key="16">
    <citation type="journal article" date="2009" name="Science">
        <title>Global analysis of Cdk1 substrate phosphorylation sites provides insights into evolution.</title>
        <authorList>
            <person name="Holt L.J."/>
            <person name="Tuch B.B."/>
            <person name="Villen J."/>
            <person name="Johnson A.D."/>
            <person name="Gygi S.P."/>
            <person name="Morgan D.O."/>
        </authorList>
    </citation>
    <scope>PHOSPHORYLATION [LARGE SCALE ANALYSIS] AT SER-67</scope>
    <scope>IDENTIFICATION BY MASS SPECTROMETRY [LARGE SCALE ANALYSIS]</scope>
</reference>
<reference key="17">
    <citation type="journal article" date="2021" name="Proc. Natl. Acad. Sci. U.S.A.">
        <title>Downregulation of autophagy by Met30-mediated Atg9 ubiquitination.</title>
        <authorList>
            <person name="Feng Y."/>
            <person name="Ariosa A.R."/>
            <person name="Yang Y."/>
            <person name="Hu Z."/>
            <person name="Dengjel J."/>
            <person name="Klionsky D.J."/>
        </authorList>
    </citation>
    <scope>FUNCTION</scope>
    <scope>PATHWAY</scope>
</reference>
<comment type="function">
    <text evidence="3 6 7 8 10 11 13">Substrate-recognition component of the SCF(Met30) complex, an E3 ubiquitin ligase complex that mediates the ubiquitination and subsequent proteasomal degradation of target proteins (PubMed:10637232, PubMed:14660673, PubMed:9716410). Negatively regulates sulfur amino acids biosynthesis genes expression (PubMed:15689486, PubMed:15870262, PubMed:8524217). Controls cell cycle function (being required for the G1/S transition and M-phase but not the S-phase), sulfur metabolism, and methionine biosynthesis as part of the SCF(Met30) complex (PubMed:15689486, PubMed:15870262, PubMed:8524217). Required for the efficient binding of CDC45 and MCM proteins to origins of replication (PubMed:15689486, PubMed:15870262, PubMed:8524217). Required for efficient expression of G1 cyclins (PubMed:15870262). The SCF(Met30) complex catalyzes ubiquitination and degradation of the Cdk-inhibitory kinase SWE1 (PubMed:9716410). Involved in the S-adenosylmethionine (AdoMet)-mediated inhibition of the transcription function of MET4 (PubMed:10637232, PubMed:8524217). The SCF(Met30) complex mediates ubiquitination and subsequent degradation of MET4 and the cellular response to cadmium (PubMed:10637232). The SCF(Met30) complex acts as an inhibitor of autophagy by promoting ubiquitination and degradation of ATG9 in normal conditions (PubMed:33443148).</text>
</comment>
<comment type="pathway">
    <text evidence="10 13">Protein modification; protein ubiquitination.</text>
</comment>
<comment type="subunit">
    <text evidence="3 6 9 10 11 12 13">Homomultimer (PubMed:14660673). Interacts with CDC53 and SKP1/CBF3D to form the E3 ubiquitin ligase complex SCF(Met30) (PubMed:14660673, PubMed:33443148, PubMed:9499404, PubMed:9716410). Interacts with MET4 (PubMed:10637232, PubMed:15883825, PubMed:8524217).</text>
</comment>
<comment type="interaction">
    <interactant intactId="EBI-11507">
        <id>P39014</id>
    </interactant>
    <interactant intactId="EBI-4321">
        <id>Q12018</id>
        <label>CDC53</label>
    </interactant>
    <organismsDiffer>false</organismsDiffer>
    <experiments>11</experiments>
</comment>
<comment type="interaction">
    <interactant intactId="EBI-11507">
        <id>P39014</id>
    </interactant>
    <interactant intactId="EBI-11507">
        <id>P39014</id>
        <label>MET30</label>
    </interactant>
    <organismsDiffer>false</organismsDiffer>
    <experiments>2</experiments>
</comment>
<comment type="interaction">
    <interactant intactId="EBI-11507">
        <id>P39014</id>
    </interactant>
    <interactant intactId="EBI-10757">
        <id>P32389</id>
        <label>MET4</label>
    </interactant>
    <organismsDiffer>false</organismsDiffer>
    <experiments>7</experiments>
</comment>
<comment type="interaction">
    <interactant intactId="EBI-11507">
        <id>P39014</id>
    </interactant>
    <interactant intactId="EBI-4090">
        <id>P52286</id>
        <label>SKP1</label>
    </interactant>
    <organismsDiffer>false</organismsDiffer>
    <experiments>15</experiments>
</comment>
<comment type="interaction">
    <interactant intactId="EBI-11507">
        <id>P39014</id>
    </interactant>
    <interactant intactId="EBI-38714">
        <id>Q12020</id>
        <label>SRL2</label>
    </interactant>
    <organismsDiffer>false</organismsDiffer>
    <experiments>3</experiments>
</comment>
<comment type="subcellular location">
    <subcellularLocation>
        <location evidence="6">Cytoplasm</location>
    </subcellularLocation>
    <subcellularLocation>
        <location evidence="3 6">Nucleus</location>
    </subcellularLocation>
</comment>
<comment type="induction">
    <text evidence="3 4">Transcriptional activation requires MET4 as well as MET31 and MET32. Regulated by intracellular AdoMet levels. L-methionine regulates the abundance of MET30. The amount of MET30 regulates the activity of the E3 ubiquitin ligase complex SCF(Met30).</text>
</comment>
<comment type="miscellaneous">
    <text evidence="5">Present with 217 molecules/cell in log phase SD medium.</text>
</comment>
<comment type="similarity">
    <text evidence="15">Belongs to the WD repeat MET30/SCONB/SCON-2 family.</text>
</comment>
<gene>
    <name evidence="14 16" type="primary">MET30</name>
    <name evidence="16" type="ordered locus">YIL046W</name>
</gene>
<dbReference type="EMBL" id="Z46861">
    <property type="protein sequence ID" value="CAA86905.1"/>
    <property type="molecule type" value="Genomic_DNA"/>
</dbReference>
<dbReference type="EMBL" id="L26505">
    <property type="protein sequence ID" value="AAA96717.1"/>
    <property type="molecule type" value="Genomic_DNA"/>
</dbReference>
<dbReference type="EMBL" id="BK006942">
    <property type="protein sequence ID" value="DAA08502.1"/>
    <property type="molecule type" value="Genomic_DNA"/>
</dbReference>
<dbReference type="PIR" id="S49932">
    <property type="entry name" value="S49932"/>
</dbReference>
<dbReference type="RefSeq" id="NP_012218.1">
    <property type="nucleotide sequence ID" value="NM_001179396.1"/>
</dbReference>
<dbReference type="SMR" id="P39014"/>
<dbReference type="BioGRID" id="34944">
    <property type="interactions" value="510"/>
</dbReference>
<dbReference type="ComplexPortal" id="CPX-3249">
    <property type="entry name" value="SCF-MET30 E3 ubiquitin ligase complex"/>
</dbReference>
<dbReference type="DIP" id="DIP-1439N"/>
<dbReference type="FunCoup" id="P39014">
    <property type="interactions" value="300"/>
</dbReference>
<dbReference type="IntAct" id="P39014">
    <property type="interactions" value="109"/>
</dbReference>
<dbReference type="MINT" id="P39014"/>
<dbReference type="STRING" id="4932.YIL046W"/>
<dbReference type="iPTMnet" id="P39014"/>
<dbReference type="PaxDb" id="4932-YIL046W"/>
<dbReference type="PeptideAtlas" id="P39014"/>
<dbReference type="EnsemblFungi" id="YIL046W_mRNA">
    <property type="protein sequence ID" value="YIL046W"/>
    <property type="gene ID" value="YIL046W"/>
</dbReference>
<dbReference type="GeneID" id="854765"/>
<dbReference type="KEGG" id="sce:YIL046W"/>
<dbReference type="AGR" id="SGD:S000001308"/>
<dbReference type="SGD" id="S000001308">
    <property type="gene designation" value="MET30"/>
</dbReference>
<dbReference type="VEuPathDB" id="FungiDB:YIL046W"/>
<dbReference type="eggNOG" id="KOG0274">
    <property type="taxonomic scope" value="Eukaryota"/>
</dbReference>
<dbReference type="GeneTree" id="ENSGT01120000274688"/>
<dbReference type="HOGENOM" id="CLU_000288_103_1_1"/>
<dbReference type="InParanoid" id="P39014"/>
<dbReference type="OMA" id="PTHTACY"/>
<dbReference type="OrthoDB" id="5580488at2759"/>
<dbReference type="BioCyc" id="YEAST:G3O-31317-MONOMER"/>
<dbReference type="UniPathway" id="UPA00143"/>
<dbReference type="BioGRID-ORCS" id="854765">
    <property type="hits" value="9 hits in 10 CRISPR screens"/>
</dbReference>
<dbReference type="PRO" id="PR:P39014"/>
<dbReference type="Proteomes" id="UP000002311">
    <property type="component" value="Chromosome IX"/>
</dbReference>
<dbReference type="RNAct" id="P39014">
    <property type="molecule type" value="protein"/>
</dbReference>
<dbReference type="GO" id="GO:0005737">
    <property type="term" value="C:cytoplasm"/>
    <property type="evidence" value="ECO:0007669"/>
    <property type="project" value="UniProtKB-SubCell"/>
</dbReference>
<dbReference type="GO" id="GO:0043224">
    <property type="term" value="C:nuclear SCF ubiquitin ligase complex"/>
    <property type="evidence" value="ECO:0000314"/>
    <property type="project" value="SGD"/>
</dbReference>
<dbReference type="GO" id="GO:0005634">
    <property type="term" value="C:nucleus"/>
    <property type="evidence" value="ECO:0000314"/>
    <property type="project" value="SGD"/>
</dbReference>
<dbReference type="GO" id="GO:0019005">
    <property type="term" value="C:SCF ubiquitin ligase complex"/>
    <property type="evidence" value="ECO:0000314"/>
    <property type="project" value="UniProtKB"/>
</dbReference>
<dbReference type="GO" id="GO:0042802">
    <property type="term" value="F:identical protein binding"/>
    <property type="evidence" value="ECO:0000353"/>
    <property type="project" value="IntAct"/>
</dbReference>
<dbReference type="GO" id="GO:0140299">
    <property type="term" value="F:molecular sensor activity"/>
    <property type="evidence" value="ECO:0000315"/>
    <property type="project" value="SGD"/>
</dbReference>
<dbReference type="GO" id="GO:0043130">
    <property type="term" value="F:ubiquitin binding"/>
    <property type="evidence" value="ECO:0000314"/>
    <property type="project" value="SGD"/>
</dbReference>
<dbReference type="GO" id="GO:1990756">
    <property type="term" value="F:ubiquitin-like ligase-substrate adaptor activity"/>
    <property type="evidence" value="ECO:0000314"/>
    <property type="project" value="UniProtKB"/>
</dbReference>
<dbReference type="GO" id="GO:0019344">
    <property type="term" value="P:cysteine biosynthetic process"/>
    <property type="evidence" value="ECO:0007669"/>
    <property type="project" value="UniProtKB-KW"/>
</dbReference>
<dbReference type="GO" id="GO:0000082">
    <property type="term" value="P:G1/S transition of mitotic cell cycle"/>
    <property type="evidence" value="ECO:0000315"/>
    <property type="project" value="SGD"/>
</dbReference>
<dbReference type="GO" id="GO:0009086">
    <property type="term" value="P:methionine biosynthetic process"/>
    <property type="evidence" value="ECO:0007669"/>
    <property type="project" value="UniProtKB-KW"/>
</dbReference>
<dbReference type="GO" id="GO:0000209">
    <property type="term" value="P:protein polyubiquitination"/>
    <property type="evidence" value="ECO:0000314"/>
    <property type="project" value="UniProtKB"/>
</dbReference>
<dbReference type="GO" id="GO:0016567">
    <property type="term" value="P:protein ubiquitination"/>
    <property type="evidence" value="ECO:0000315"/>
    <property type="project" value="SGD"/>
</dbReference>
<dbReference type="GO" id="GO:0007346">
    <property type="term" value="P:regulation of mitotic cell cycle"/>
    <property type="evidence" value="ECO:0000303"/>
    <property type="project" value="ComplexPortal"/>
</dbReference>
<dbReference type="GO" id="GO:0031335">
    <property type="term" value="P:regulation of sulfur amino acid metabolic process"/>
    <property type="evidence" value="ECO:0000303"/>
    <property type="project" value="ComplexPortal"/>
</dbReference>
<dbReference type="GO" id="GO:0006357">
    <property type="term" value="P:regulation of transcription by RNA polymerase II"/>
    <property type="evidence" value="ECO:0000315"/>
    <property type="project" value="SGD"/>
</dbReference>
<dbReference type="GO" id="GO:0046685">
    <property type="term" value="P:response to arsenic-containing substance"/>
    <property type="evidence" value="ECO:0000314"/>
    <property type="project" value="SGD"/>
</dbReference>
<dbReference type="GO" id="GO:0046686">
    <property type="term" value="P:response to cadmium ion"/>
    <property type="evidence" value="ECO:0000314"/>
    <property type="project" value="SGD"/>
</dbReference>
<dbReference type="GO" id="GO:0031146">
    <property type="term" value="P:SCF-dependent proteasomal ubiquitin-dependent protein catabolic process"/>
    <property type="evidence" value="ECO:0000316"/>
    <property type="project" value="SGD"/>
</dbReference>
<dbReference type="GO" id="GO:0006511">
    <property type="term" value="P:ubiquitin-dependent protein catabolic process"/>
    <property type="evidence" value="ECO:0000303"/>
    <property type="project" value="ComplexPortal"/>
</dbReference>
<dbReference type="CDD" id="cd22147">
    <property type="entry name" value="F-box_SpPof1-like"/>
    <property type="match status" value="1"/>
</dbReference>
<dbReference type="CDD" id="cd00200">
    <property type="entry name" value="WD40"/>
    <property type="match status" value="1"/>
</dbReference>
<dbReference type="FunFam" id="1.20.1280.50:FF:000016">
    <property type="entry name" value="E3 ubiquitin ligase complex SCF subunit sconB"/>
    <property type="match status" value="1"/>
</dbReference>
<dbReference type="FunFam" id="2.130.10.10:FF:000715">
    <property type="entry name" value="F-box protein MET30"/>
    <property type="match status" value="1"/>
</dbReference>
<dbReference type="FunFam" id="2.130.10.10:FF:001373">
    <property type="entry name" value="F-box protein MET30"/>
    <property type="match status" value="1"/>
</dbReference>
<dbReference type="Gene3D" id="1.20.1280.50">
    <property type="match status" value="1"/>
</dbReference>
<dbReference type="Gene3D" id="2.130.10.10">
    <property type="entry name" value="YVTN repeat-like/Quinoprotein amine dehydrogenase"/>
    <property type="match status" value="3"/>
</dbReference>
<dbReference type="InterPro" id="IPR036047">
    <property type="entry name" value="F-box-like_dom_sf"/>
</dbReference>
<dbReference type="InterPro" id="IPR001810">
    <property type="entry name" value="F-box_dom"/>
</dbReference>
<dbReference type="InterPro" id="IPR020472">
    <property type="entry name" value="G-protein_beta_WD-40_rep"/>
</dbReference>
<dbReference type="InterPro" id="IPR051075">
    <property type="entry name" value="SCF_subunit_WD-repeat"/>
</dbReference>
<dbReference type="InterPro" id="IPR015943">
    <property type="entry name" value="WD40/YVTN_repeat-like_dom_sf"/>
</dbReference>
<dbReference type="InterPro" id="IPR019775">
    <property type="entry name" value="WD40_repeat_CS"/>
</dbReference>
<dbReference type="InterPro" id="IPR036322">
    <property type="entry name" value="WD40_repeat_dom_sf"/>
</dbReference>
<dbReference type="InterPro" id="IPR001680">
    <property type="entry name" value="WD40_rpt"/>
</dbReference>
<dbReference type="PANTHER" id="PTHR19872">
    <property type="entry name" value="UBIQUITIN LIGASE SPECIFICITY FACTOR/HREP PROTEIN"/>
    <property type="match status" value="1"/>
</dbReference>
<dbReference type="PANTHER" id="PTHR19872:SF9">
    <property type="entry name" value="UBIQUITIN-BINDING SDF UBIQUITIN LIGASE COMPLEX SUBUNIT"/>
    <property type="match status" value="1"/>
</dbReference>
<dbReference type="Pfam" id="PF12937">
    <property type="entry name" value="F-box-like"/>
    <property type="match status" value="1"/>
</dbReference>
<dbReference type="Pfam" id="PF00400">
    <property type="entry name" value="WD40"/>
    <property type="match status" value="6"/>
</dbReference>
<dbReference type="PRINTS" id="PR00320">
    <property type="entry name" value="GPROTEINBRPT"/>
</dbReference>
<dbReference type="SMART" id="SM00256">
    <property type="entry name" value="FBOX"/>
    <property type="match status" value="1"/>
</dbReference>
<dbReference type="SMART" id="SM00320">
    <property type="entry name" value="WD40"/>
    <property type="match status" value="6"/>
</dbReference>
<dbReference type="SUPFAM" id="SSF81383">
    <property type="entry name" value="F-box domain"/>
    <property type="match status" value="1"/>
</dbReference>
<dbReference type="SUPFAM" id="SSF50978">
    <property type="entry name" value="WD40 repeat-like"/>
    <property type="match status" value="1"/>
</dbReference>
<dbReference type="PROSITE" id="PS50181">
    <property type="entry name" value="FBOX"/>
    <property type="match status" value="1"/>
</dbReference>
<dbReference type="PROSITE" id="PS00678">
    <property type="entry name" value="WD_REPEATS_1"/>
    <property type="match status" value="4"/>
</dbReference>
<dbReference type="PROSITE" id="PS50082">
    <property type="entry name" value="WD_REPEATS_2"/>
    <property type="match status" value="6"/>
</dbReference>
<dbReference type="PROSITE" id="PS50294">
    <property type="entry name" value="WD_REPEATS_REGION"/>
    <property type="match status" value="1"/>
</dbReference>
<name>MET30_YEAST</name>
<sequence length="640" mass="72835">MRRERQRMMSFEDKDKDDLDNSNSNNSSEMTDTAMMPPLKRLLITGSSDDLAQGSSGKKKMTMATRSPSSSPDLATNDSGTRVQPLPEYNFTKFCYRHNPDIQFSPTHTACYKQDLKRTQEINANIAKLPLQEQSDIHHIISKYSNSNDKIRKLILDGILSTSCFPQLSYISSLVTHMIKIDFISILPQELSLKILSYLDCQSLCNATRVCRKWQKLADDDRVWYHMCEQHIDRKCPNCGWGLPLLHMKRARIQQNSTGSSSNADIQTQTTRPWKVIYRERFKVESNWRKGHCRIQEFKGHMDGVLTLQFNYRLLFTGSYDSTIGIWDLFTGKLIRRLSGHSDGVKTLYFDDRKLITGSLDKTIRVWNYITGECISTYRGHSDSVLSVDSYQKVIVSGSADKTVKVWHVESRTCYTLRGHTEWVNCVKLHPKSFSCFSCSDDTTIRMWDIRTNSCLKVFRGHVGQVQKIIPLTIKDVENLATDNTSDGSSPQDDPTMTDGADESDTPSNEQETVLDENIPYPTHLLSCGLDNTIKLWDVKTGKCIRTQFGHVEGVWDIAADNFRIISGSHDGSIKVWDLQSGKCMHTFNGRRLQRETQHTQTQSLGDKVAPIACVCIGDSECFSGDEFGCVKMYKFDLND</sequence>
<accession>P39014</accession>
<accession>D6VVN6</accession>
<protein>
    <recommendedName>
        <fullName evidence="15">F-box protein MET30</fullName>
    </recommendedName>
    <alternativeName>
        <fullName>E3 ubiquitin ligase complex SCF(Met30) subunit MET30</fullName>
    </alternativeName>
    <alternativeName>
        <fullName>Methionine-requiring protein 30</fullName>
    </alternativeName>
</protein>
<keyword id="KW-0028">Amino-acid biosynthesis</keyword>
<keyword id="KW-0131">Cell cycle</keyword>
<keyword id="KW-0198">Cysteine biosynthesis</keyword>
<keyword id="KW-0963">Cytoplasm</keyword>
<keyword id="KW-0486">Methionine biosynthesis</keyword>
<keyword id="KW-0539">Nucleus</keyword>
<keyword id="KW-0597">Phosphoprotein</keyword>
<keyword id="KW-1185">Reference proteome</keyword>
<keyword id="KW-0677">Repeat</keyword>
<keyword id="KW-0804">Transcription</keyword>
<keyword id="KW-0805">Transcription regulation</keyword>
<keyword id="KW-0833">Ubl conjugation pathway</keyword>
<keyword id="KW-0853">WD repeat</keyword>
<feature type="chain" id="PRO_0000051087" description="F-box protein MET30">
    <location>
        <begin position="1"/>
        <end position="640"/>
    </location>
</feature>
<feature type="domain" description="F-box" evidence="1">
    <location>
        <begin position="181"/>
        <end position="227"/>
    </location>
</feature>
<feature type="repeat" description="WD 1">
    <location>
        <begin position="300"/>
        <end position="328"/>
    </location>
</feature>
<feature type="repeat" description="WD 2">
    <location>
        <begin position="340"/>
        <end position="368"/>
    </location>
</feature>
<feature type="repeat" description="WD 3">
    <location>
        <begin position="380"/>
        <end position="408"/>
    </location>
</feature>
<feature type="repeat" description="WD 4">
    <location>
        <begin position="419"/>
        <end position="449"/>
    </location>
</feature>
<feature type="repeat" description="WD 5">
    <location>
        <begin position="461"/>
        <end position="499"/>
    </location>
</feature>
<feature type="repeat" description="WD 6">
    <location>
        <begin position="509"/>
        <end position="538"/>
    </location>
</feature>
<feature type="repeat" description="WD 7">
    <location>
        <begin position="550"/>
        <end position="578"/>
    </location>
</feature>
<feature type="repeat" description="WD 8">
    <location>
        <begin position="607"/>
        <end position="635"/>
    </location>
</feature>
<feature type="region of interest" description="Necessary to mediate nuclear localization">
    <location>
        <begin position="1"/>
        <end position="299"/>
    </location>
</feature>
<feature type="region of interest" description="Disordered" evidence="2">
    <location>
        <begin position="1"/>
        <end position="84"/>
    </location>
</feature>
<feature type="region of interest" description="Important for mediating homomultimerization">
    <location>
        <begin position="180"/>
        <end position="277"/>
    </location>
</feature>
<feature type="region of interest" description="Interaction with SKP1/CBF3D">
    <location>
        <begin position="180"/>
        <end position="225"/>
    </location>
</feature>
<feature type="region of interest" description="Interaction with MET4">
    <location>
        <begin position="277"/>
        <end position="640"/>
    </location>
</feature>
<feature type="region of interest" description="Disordered" evidence="2">
    <location>
        <begin position="481"/>
        <end position="516"/>
    </location>
</feature>
<feature type="compositionally biased region" description="Basic and acidic residues" evidence="2">
    <location>
        <begin position="1"/>
        <end position="19"/>
    </location>
</feature>
<feature type="compositionally biased region" description="Polar residues" evidence="2">
    <location>
        <begin position="45"/>
        <end position="56"/>
    </location>
</feature>
<feature type="compositionally biased region" description="Polar residues" evidence="2">
    <location>
        <begin position="64"/>
        <end position="82"/>
    </location>
</feature>
<feature type="compositionally biased region" description="Polar residues" evidence="2">
    <location>
        <begin position="481"/>
        <end position="495"/>
    </location>
</feature>
<feature type="modified residue" description="Phosphoserine" evidence="17">
    <location>
        <position position="67"/>
    </location>
</feature>
<feature type="mutagenesis site" description="Strongly reduces nuclear localization; inhibits interaction with SKP1/CBF3D." evidence="6">
    <original>L</original>
    <variation>D</variation>
    <location>
        <position position="187"/>
    </location>
</feature>
<feature type="mutagenesis site" description="Strongly reduces nuclear localization; inhibits interaction with SKP1/CBF3D." evidence="6">
    <original>E</original>
    <variation>A</variation>
    <location>
        <position position="190"/>
    </location>
</feature>
<feature type="mutagenesis site" description="Inactivates MET30 and prevents MET4 interaction; when associated with A-425 and A-467." evidence="9">
    <original>L</original>
    <variation>D</variation>
    <location>
        <position position="386"/>
    </location>
</feature>
<feature type="mutagenesis site" description="Inactivates MET30 and prevents MET4 interaction; when associated with D-530 or D-386 and A-467." evidence="9">
    <original>N</original>
    <variation>A</variation>
    <location>
        <position position="425"/>
    </location>
</feature>
<feature type="mutagenesis site" description="Inactivates MET30 and prevents MET4 interaction; when associated with D-386 and A-425." evidence="9">
    <original>Q</original>
    <variation>A</variation>
    <location>
        <position position="467"/>
    </location>
</feature>
<feature type="mutagenesis site" description="Inactivates MET30 and prevents MET4 interaction; when associated with A-425." evidence="9">
    <original>L</original>
    <variation>D</variation>
    <location>
        <position position="530"/>
    </location>
</feature>
<feature type="sequence conflict" description="In Ref. 1; AAA96717." evidence="15" ref="1">
    <original>M</original>
    <variation>I</variation>
    <location>
        <position position="61"/>
    </location>
</feature>
<proteinExistence type="evidence at protein level"/>